<reference key="1">
    <citation type="journal article" date="2010" name="PLoS Genet.">
        <title>Genome sequence of the plant growth promoting endophytic bacterium Enterobacter sp. 638.</title>
        <authorList>
            <person name="Taghavi S."/>
            <person name="van der Lelie D."/>
            <person name="Hoffman A."/>
            <person name="Zhang Y.B."/>
            <person name="Walla M.D."/>
            <person name="Vangronsveld J."/>
            <person name="Newman L."/>
            <person name="Monchy S."/>
        </authorList>
    </citation>
    <scope>NUCLEOTIDE SEQUENCE [LARGE SCALE GENOMIC DNA]</scope>
    <source>
        <strain>638</strain>
    </source>
</reference>
<organism>
    <name type="scientific">Enterobacter sp. (strain 638)</name>
    <dbReference type="NCBI Taxonomy" id="399742"/>
    <lineage>
        <taxon>Bacteria</taxon>
        <taxon>Pseudomonadati</taxon>
        <taxon>Pseudomonadota</taxon>
        <taxon>Gammaproteobacteria</taxon>
        <taxon>Enterobacterales</taxon>
        <taxon>Enterobacteriaceae</taxon>
        <taxon>Enterobacter</taxon>
    </lineage>
</organism>
<comment type="function">
    <text evidence="1">Involved in the efflux of sugars. The physiological role may be the reduction of the intracellular concentration of toxic sugars or sugar metabolites.</text>
</comment>
<comment type="subcellular location">
    <subcellularLocation>
        <location evidence="1">Cell inner membrane</location>
        <topology evidence="1">Multi-pass membrane protein</topology>
    </subcellularLocation>
</comment>
<comment type="similarity">
    <text evidence="1">Belongs to the major facilitator superfamily. SotB (TC 2.A.1.2) family.</text>
</comment>
<evidence type="ECO:0000255" key="1">
    <source>
        <dbReference type="HAMAP-Rule" id="MF_00517"/>
    </source>
</evidence>
<name>SOTB_ENT38</name>
<proteinExistence type="inferred from homology"/>
<sequence>MTTNTVSRKVAWLRVVTLAIAAFIFNTTEFVPVGLLSDIAQSFQMETAQVGIMLTIYAWVVALMSLPFMLLTSQMERRKLLIGLFVLFIASHVLSFLAWNFNVLVISRIGIAFAHAIFWSITASLAIRLAPAGKRAQALSLLATGTALAMVLGLPIGRIVGQYFGWRTTFFAIGLGALITLLCLIKLLPKLPSEHSGSLKSLPLLFRRPALMSIYLLTVVVVTAHYTAYSYIEPFVQVVAGFSANFATVLLLILGGAGIIGSVLFGKLGNKHASLLVSSAIGLLLACLLLLMPAAQSETHLAILSIFWGVAIMIIGLGMQVKVLALAPDATDVAMSLFSGIFNIGIGAGALVGNQISLHLSMSAIGYLGAIPALAALIWSILIFRKWPVALEEQPHHG</sequence>
<gene>
    <name evidence="1" type="primary">sotB</name>
    <name type="ordered locus">Ent638_2000</name>
</gene>
<feature type="chain" id="PRO_1000060901" description="Probable sugar efflux transporter">
    <location>
        <begin position="1"/>
        <end position="398"/>
    </location>
</feature>
<feature type="transmembrane region" description="Helical" evidence="1">
    <location>
        <begin position="15"/>
        <end position="35"/>
    </location>
</feature>
<feature type="transmembrane region" description="Helical" evidence="1">
    <location>
        <begin position="50"/>
        <end position="70"/>
    </location>
</feature>
<feature type="transmembrane region" description="Helical" evidence="1">
    <location>
        <begin position="81"/>
        <end position="101"/>
    </location>
</feature>
<feature type="transmembrane region" description="Helical" evidence="1">
    <location>
        <begin position="103"/>
        <end position="123"/>
    </location>
</feature>
<feature type="transmembrane region" description="Helical" evidence="1">
    <location>
        <begin position="136"/>
        <end position="156"/>
    </location>
</feature>
<feature type="transmembrane region" description="Helical" evidence="1">
    <location>
        <begin position="169"/>
        <end position="189"/>
    </location>
</feature>
<feature type="transmembrane region" description="Helical" evidence="1">
    <location>
        <begin position="209"/>
        <end position="229"/>
    </location>
</feature>
<feature type="transmembrane region" description="Helical" evidence="1">
    <location>
        <begin position="246"/>
        <end position="266"/>
    </location>
</feature>
<feature type="transmembrane region" description="Helical" evidence="1">
    <location>
        <begin position="275"/>
        <end position="295"/>
    </location>
</feature>
<feature type="transmembrane region" description="Helical" evidence="1">
    <location>
        <begin position="301"/>
        <end position="321"/>
    </location>
</feature>
<feature type="transmembrane region" description="Helical" evidence="1">
    <location>
        <begin position="333"/>
        <end position="353"/>
    </location>
</feature>
<feature type="transmembrane region" description="Helical" evidence="1">
    <location>
        <begin position="364"/>
        <end position="384"/>
    </location>
</feature>
<keyword id="KW-0997">Cell inner membrane</keyword>
<keyword id="KW-1003">Cell membrane</keyword>
<keyword id="KW-0472">Membrane</keyword>
<keyword id="KW-0762">Sugar transport</keyword>
<keyword id="KW-0812">Transmembrane</keyword>
<keyword id="KW-1133">Transmembrane helix</keyword>
<keyword id="KW-0813">Transport</keyword>
<dbReference type="EMBL" id="CP000653">
    <property type="protein sequence ID" value="ABP60676.1"/>
    <property type="molecule type" value="Genomic_DNA"/>
</dbReference>
<dbReference type="RefSeq" id="WP_012017391.1">
    <property type="nucleotide sequence ID" value="NC_009436.1"/>
</dbReference>
<dbReference type="SMR" id="A4WAE6"/>
<dbReference type="KEGG" id="ent:Ent638_2000"/>
<dbReference type="eggNOG" id="COG2814">
    <property type="taxonomic scope" value="Bacteria"/>
</dbReference>
<dbReference type="HOGENOM" id="CLU_001265_61_1_6"/>
<dbReference type="OrthoDB" id="9788453at2"/>
<dbReference type="Proteomes" id="UP000000230">
    <property type="component" value="Chromosome"/>
</dbReference>
<dbReference type="GO" id="GO:0005886">
    <property type="term" value="C:plasma membrane"/>
    <property type="evidence" value="ECO:0007669"/>
    <property type="project" value="UniProtKB-SubCell"/>
</dbReference>
<dbReference type="GO" id="GO:0015144">
    <property type="term" value="F:carbohydrate transmembrane transporter activity"/>
    <property type="evidence" value="ECO:0007669"/>
    <property type="project" value="UniProtKB-UniRule"/>
</dbReference>
<dbReference type="CDD" id="cd17324">
    <property type="entry name" value="MFS_NepI_like"/>
    <property type="match status" value="1"/>
</dbReference>
<dbReference type="Gene3D" id="1.20.1250.20">
    <property type="entry name" value="MFS general substrate transporter like domains"/>
    <property type="match status" value="1"/>
</dbReference>
<dbReference type="HAMAP" id="MF_00517">
    <property type="entry name" value="MFS_SotB"/>
    <property type="match status" value="1"/>
</dbReference>
<dbReference type="InterPro" id="IPR011701">
    <property type="entry name" value="MFS"/>
</dbReference>
<dbReference type="InterPro" id="IPR020846">
    <property type="entry name" value="MFS_dom"/>
</dbReference>
<dbReference type="InterPro" id="IPR050189">
    <property type="entry name" value="MFS_Efflux_Transporters"/>
</dbReference>
<dbReference type="InterPro" id="IPR036259">
    <property type="entry name" value="MFS_trans_sf"/>
</dbReference>
<dbReference type="InterPro" id="IPR023495">
    <property type="entry name" value="Sugar_effux_transptr_put"/>
</dbReference>
<dbReference type="NCBIfam" id="NF002921">
    <property type="entry name" value="PRK03545.1"/>
    <property type="match status" value="1"/>
</dbReference>
<dbReference type="PANTHER" id="PTHR43124">
    <property type="entry name" value="PURINE EFFLUX PUMP PBUE"/>
    <property type="match status" value="1"/>
</dbReference>
<dbReference type="PANTHER" id="PTHR43124:SF4">
    <property type="entry name" value="SUGAR EFFLUX TRANSPORTER"/>
    <property type="match status" value="1"/>
</dbReference>
<dbReference type="Pfam" id="PF07690">
    <property type="entry name" value="MFS_1"/>
    <property type="match status" value="1"/>
</dbReference>
<dbReference type="SUPFAM" id="SSF103473">
    <property type="entry name" value="MFS general substrate transporter"/>
    <property type="match status" value="1"/>
</dbReference>
<dbReference type="PROSITE" id="PS50850">
    <property type="entry name" value="MFS"/>
    <property type="match status" value="1"/>
</dbReference>
<accession>A4WAE6</accession>
<protein>
    <recommendedName>
        <fullName evidence="1">Probable sugar efflux transporter</fullName>
    </recommendedName>
</protein>